<keyword id="KW-1015">Disulfide bond</keyword>
<keyword id="KW-0325">Glycoprotein</keyword>
<keyword id="KW-1032">Host cell membrane</keyword>
<keyword id="KW-1039">Host endosome</keyword>
<keyword id="KW-1040">Host Golgi apparatus</keyword>
<keyword id="KW-1043">Host membrane</keyword>
<keyword id="KW-0945">Host-virus interaction</keyword>
<keyword id="KW-0472">Membrane</keyword>
<keyword id="KW-1185">Reference proteome</keyword>
<keyword id="KW-0732">Signal</keyword>
<keyword id="KW-0812">Transmembrane</keyword>
<keyword id="KW-1133">Transmembrane helix</keyword>
<keyword id="KW-1161">Viral attachment to host cell</keyword>
<keyword id="KW-0261">Viral envelope protein</keyword>
<keyword id="KW-0946">Virion</keyword>
<keyword id="KW-1160">Virus entry into host cell</keyword>
<evidence type="ECO:0000255" key="1">
    <source>
        <dbReference type="HAMAP-Rule" id="MF_04032"/>
    </source>
</evidence>
<evidence type="ECO:0000256" key="2">
    <source>
        <dbReference type="SAM" id="MobiDB-lite"/>
    </source>
</evidence>
<evidence type="ECO:0000305" key="3"/>
<proteinExistence type="inferred from homology"/>
<comment type="function">
    <text evidence="1">Envelope glycoprotein that forms spikes at the surface of virion envelope. Essential for the initial attachment to heparan sulfate moieties of the host cell surface proteoglycans. Involved in fusion of viral and cellular membranes leading to virus entry into the host cell. Following initial binding to its host receptors, membrane fusion is mediated by the fusion machinery composed at least of gB and the heterodimer gH/gL. May be involved in the fusion between the virion envelope and the outer nuclear membrane during virion egress.</text>
</comment>
<comment type="subunit">
    <text evidence="1">Homotrimer; disulfide-linked. Binds to heparan sulfate proteoglycans. Interacts with gH/gL heterodimer.</text>
</comment>
<comment type="subcellular location">
    <subcellularLocation>
        <location evidence="1">Virion membrane</location>
        <topology evidence="1">Single-pass type I membrane protein</topology>
    </subcellularLocation>
    <subcellularLocation>
        <location evidence="1">Host cell membrane</location>
        <topology evidence="1">Single-pass type I membrane protein</topology>
    </subcellularLocation>
    <subcellularLocation>
        <location evidence="1">Host endosome membrane</location>
        <topology evidence="1">Single-pass type I membrane protein</topology>
    </subcellularLocation>
    <subcellularLocation>
        <location evidence="1">Host Golgi apparatus membrane</location>
        <topology evidence="1">Single-pass type I membrane protein</topology>
    </subcellularLocation>
    <text evidence="1">During virion morphogenesis, this protein probably accumulates in the endosomes and trans-Golgi where secondary envelopment occurs. It is probably transported to the cell surface from where it is endocytosed and directed to the trans-Golgi network (TGN).</text>
</comment>
<comment type="PTM">
    <text evidence="3">A proteolytic cleavage by host furin generates two subunits that remain linked by disulfide bonds.</text>
</comment>
<comment type="similarity">
    <text evidence="1">Belongs to the herpesviridae glycoprotein B family.</text>
</comment>
<name>GB_GAHVM</name>
<protein>
    <recommendedName>
        <fullName evidence="1">Envelope glycoprotein B</fullName>
        <shortName evidence="1">gB</shortName>
    </recommendedName>
</protein>
<organism>
    <name type="scientific">Gallid herpesvirus 2 (strain Chicken/Md5/ATCC VR-987)</name>
    <name type="common">GaHV-2</name>
    <name type="synonym">Marek's disease herpesvirus type 1</name>
    <dbReference type="NCBI Taxonomy" id="10389"/>
    <lineage>
        <taxon>Viruses</taxon>
        <taxon>Duplodnaviria</taxon>
        <taxon>Heunggongvirae</taxon>
        <taxon>Peploviricota</taxon>
        <taxon>Herviviricetes</taxon>
        <taxon>Herpesvirales</taxon>
        <taxon>Orthoherpesviridae</taxon>
        <taxon>Alphaherpesvirinae</taxon>
        <taxon>Mardivirus</taxon>
        <taxon>Mardivirus gallidalpha2</taxon>
        <taxon>Gallid alphaherpesvirus 2</taxon>
    </lineage>
</organism>
<accession>Q77MS3</accession>
<dbReference type="EMBL" id="AF243438">
    <property type="protein sequence ID" value="AAG14220.1"/>
    <property type="molecule type" value="Genomic_DNA"/>
</dbReference>
<dbReference type="RefSeq" id="YP_001033956.1">
    <property type="nucleotide sequence ID" value="NC_002229.3"/>
</dbReference>
<dbReference type="SMR" id="Q77MS3"/>
<dbReference type="GlyCosmos" id="Q77MS3">
    <property type="glycosylation" value="7 sites, No reported glycans"/>
</dbReference>
<dbReference type="GeneID" id="4811501"/>
<dbReference type="KEGG" id="vg:4811501"/>
<dbReference type="Proteomes" id="UP000008072">
    <property type="component" value="Segment"/>
</dbReference>
<dbReference type="GO" id="GO:0044175">
    <property type="term" value="C:host cell endosome membrane"/>
    <property type="evidence" value="ECO:0007669"/>
    <property type="project" value="UniProtKB-SubCell"/>
</dbReference>
<dbReference type="GO" id="GO:0044178">
    <property type="term" value="C:host cell Golgi membrane"/>
    <property type="evidence" value="ECO:0007669"/>
    <property type="project" value="UniProtKB-SubCell"/>
</dbReference>
<dbReference type="GO" id="GO:0020002">
    <property type="term" value="C:host cell plasma membrane"/>
    <property type="evidence" value="ECO:0007669"/>
    <property type="project" value="UniProtKB-SubCell"/>
</dbReference>
<dbReference type="GO" id="GO:0016020">
    <property type="term" value="C:membrane"/>
    <property type="evidence" value="ECO:0007669"/>
    <property type="project" value="UniProtKB-KW"/>
</dbReference>
<dbReference type="GO" id="GO:0019031">
    <property type="term" value="C:viral envelope"/>
    <property type="evidence" value="ECO:0007669"/>
    <property type="project" value="UniProtKB-KW"/>
</dbReference>
<dbReference type="GO" id="GO:0055036">
    <property type="term" value="C:virion membrane"/>
    <property type="evidence" value="ECO:0007669"/>
    <property type="project" value="UniProtKB-SubCell"/>
</dbReference>
<dbReference type="GO" id="GO:0046718">
    <property type="term" value="P:symbiont entry into host cell"/>
    <property type="evidence" value="ECO:0007669"/>
    <property type="project" value="UniProtKB-KW"/>
</dbReference>
<dbReference type="GO" id="GO:0019062">
    <property type="term" value="P:virion attachment to host cell"/>
    <property type="evidence" value="ECO:0007669"/>
    <property type="project" value="UniProtKB-KW"/>
</dbReference>
<dbReference type="Gene3D" id="1.20.5.1890">
    <property type="match status" value="1"/>
</dbReference>
<dbReference type="Gene3D" id="2.30.29.100">
    <property type="match status" value="1"/>
</dbReference>
<dbReference type="Gene3D" id="2.30.30.1230">
    <property type="match status" value="1"/>
</dbReference>
<dbReference type="Gene3D" id="6.10.250.3280">
    <property type="match status" value="1"/>
</dbReference>
<dbReference type="HAMAP" id="MF_04032">
    <property type="entry name" value="HSV_GB"/>
    <property type="match status" value="1"/>
</dbReference>
<dbReference type="InterPro" id="IPR035377">
    <property type="entry name" value="Glycoprot_B_PH1"/>
</dbReference>
<dbReference type="InterPro" id="IPR035381">
    <property type="entry name" value="Glycoprot_B_PH2"/>
</dbReference>
<dbReference type="InterPro" id="IPR038631">
    <property type="entry name" value="Glycoprot_B_PH2_sf"/>
</dbReference>
<dbReference type="InterPro" id="IPR055341">
    <property type="entry name" value="Glycoprotein_B_ecto_C"/>
</dbReference>
<dbReference type="InterPro" id="IPR000234">
    <property type="entry name" value="Herpes_Glycoprot_B"/>
</dbReference>
<dbReference type="Pfam" id="PF17416">
    <property type="entry name" value="Glycoprot_B_PH1"/>
    <property type="match status" value="1"/>
</dbReference>
<dbReference type="Pfam" id="PF17417">
    <property type="entry name" value="Glycoprot_B_PH2"/>
    <property type="match status" value="1"/>
</dbReference>
<dbReference type="Pfam" id="PF00606">
    <property type="entry name" value="Glycoprotein_B"/>
    <property type="match status" value="1"/>
</dbReference>
<dbReference type="SUPFAM" id="SSF161008">
    <property type="entry name" value="Viral glycoprotein ectodomain-like"/>
    <property type="match status" value="1"/>
</dbReference>
<sequence>MHYFRRNCIFFLIVILYGTNSSPSTQNVTSREVVSSVQLSEEESTFYLCPPPVGSTVIRLEPPRKCPEPRKATEWGEGIAILFKENISPYKFKVTLYYKNIIQTTTWTGTTYRQITNRYTDRTPVSIEEITDLIDGKGRCSSKARYLRNNVYVEAFDRDAGEKQVLLKPSKFNTPESRAWHTTNETYTVWGSPWIYRTGTSVNCIVEEMDARSVFPYSYFAMANGDIANISPFYGLSPPEAAAEPMGYPQDNFKQLDSYFSMDLDKRRKASLPVKRNFLITSHFTVGWDWAPKTTRVCSMTKWKEVTEMLRATVNGRYRFMARELSATFISNTTEFDPNRIILGQCIKREAEAAIEQIFRTKYNDSHVKVGHVQYFLALGGFIVAYQPVLSKSLAHMYLRELMRDNRTDEMLDLVNNKHAIYKKNATSLSRLRRDIRNAPNRKITLDDTTAIKSTSSVQFAMLQFLYDHIQTHINDMFSRIATAWCELQNRELVLWHEGIKINPSATASATLGRRVAAKMLGDVAAVSSCTAIDAESVTLQNSMRVITSTNTCYSRPLVLFSYGENQGNIQGQLGENNELLPTLEAVEPCSANHRRYFLFGSGYALFENYNFVKMVDAADIQIASTFVELNLTLLEDREILPLSVYTKEELRDVGVLDYAEVARRNQLHELKFYDINKVIEVDTNYAFMNGLAELFNGMGQVGQAIGKVVVGAAGAIVSTISGVSAFMSNPFGALAIGLIIIAGLVAAFLAYRYVNKLKSNPMKALYPMTTEVLKAQATRELHGEESDDLERTSIDERKLEEAREMIKYMALVSAEERHEKKLRRKRRGTTAVLSDHLAKMRIKNSNPKYDKLPTTYSDSEDDAV</sequence>
<gene>
    <name evidence="1" type="primary">gB</name>
    <name type="synonym">MDV040</name>
</gene>
<reference key="1">
    <citation type="journal article" date="2000" name="J. Virol.">
        <title>The genome of a very virulent Marek's disease virus.</title>
        <authorList>
            <person name="Tulman E.R."/>
            <person name="Afonso C.L."/>
            <person name="Lu Z."/>
            <person name="Zsak L."/>
            <person name="Rock D.L."/>
            <person name="Kutish G.F."/>
        </authorList>
    </citation>
    <scope>NUCLEOTIDE SEQUENCE [LARGE SCALE GENOMIC DNA]</scope>
</reference>
<organismHost>
    <name type="scientific">Gallus gallus</name>
    <name type="common">Chicken</name>
    <dbReference type="NCBI Taxonomy" id="9031"/>
</organismHost>
<feature type="signal peptide" evidence="1">
    <location>
        <begin position="1"/>
        <end position="21"/>
    </location>
</feature>
<feature type="chain" id="PRO_0000406570" description="Envelope glycoprotein B" evidence="1">
    <location>
        <begin position="22"/>
        <end position="865"/>
    </location>
</feature>
<feature type="topological domain" description="Virion surface" evidence="1">
    <location>
        <begin position="22"/>
        <end position="731"/>
    </location>
</feature>
<feature type="transmembrane region" description="Helical" evidence="1">
    <location>
        <begin position="732"/>
        <end position="752"/>
    </location>
</feature>
<feature type="topological domain" description="Intravirion" evidence="1">
    <location>
        <begin position="753"/>
        <end position="865"/>
    </location>
</feature>
<feature type="region of interest" description="Involved in fusion and/or binding to host membrane" evidence="1">
    <location>
        <begin position="106"/>
        <end position="112"/>
    </location>
</feature>
<feature type="region of interest" description="Involved in fusion and/or binding to host membrane" evidence="1">
    <location>
        <begin position="191"/>
        <end position="198"/>
    </location>
</feature>
<feature type="region of interest" description="Hydrophobic membrane proximal region" evidence="1">
    <location>
        <begin position="676"/>
        <end position="729"/>
    </location>
</feature>
<feature type="region of interest" description="Hydrophobic membrane proximal region">
    <location>
        <begin position="683"/>
        <end position="729"/>
    </location>
</feature>
<feature type="region of interest" description="Disordered" evidence="2">
    <location>
        <begin position="843"/>
        <end position="865"/>
    </location>
</feature>
<feature type="short sequence motif" description="Golgi targeting" evidence="1">
    <location>
        <begin position="809"/>
        <end position="812"/>
    </location>
</feature>
<feature type="short sequence motif" description="Internalization motif" evidence="1">
    <location>
        <begin position="850"/>
        <end position="853"/>
    </location>
</feature>
<feature type="glycosylation site" description="N-linked (GlcNAc...) asparagine; by host" evidence="1">
    <location>
        <position position="27"/>
    </location>
</feature>
<feature type="glycosylation site" description="N-linked (GlcNAc...) asparagine; by host" evidence="1">
    <location>
        <position position="184"/>
    </location>
</feature>
<feature type="glycosylation site" description="N-linked (GlcNAc...) asparagine; by host" evidence="1">
    <location>
        <position position="332"/>
    </location>
</feature>
<feature type="glycosylation site" description="N-linked (GlcNAc...) asparagine; by host" evidence="1">
    <location>
        <position position="364"/>
    </location>
</feature>
<feature type="glycosylation site" description="N-linked (GlcNAc...) asparagine; by host" evidence="1">
    <location>
        <position position="406"/>
    </location>
</feature>
<feature type="glycosylation site" description="N-linked (GlcNAc...) asparagine; by host" evidence="1">
    <location>
        <position position="425"/>
    </location>
</feature>
<feature type="glycosylation site" description="N-linked (GlcNAc...) asparagine; by host" evidence="1">
    <location>
        <position position="631"/>
    </location>
</feature>
<feature type="disulfide bond" evidence="1">
    <location>
        <begin position="49"/>
        <end position="530"/>
    </location>
</feature>
<feature type="disulfide bond" evidence="1">
    <location>
        <begin position="66"/>
        <end position="486"/>
    </location>
</feature>
<feature type="disulfide bond" evidence="1">
    <location>
        <begin position="140"/>
        <end position="204"/>
    </location>
</feature>
<feature type="disulfide bond" evidence="1">
    <location>
        <begin position="298"/>
        <end position="346"/>
    </location>
</feature>
<feature type="disulfide bond" evidence="1">
    <location>
        <begin position="553"/>
        <end position="590"/>
    </location>
</feature>